<sequence length="247" mass="26395">MLPTFVRFSRIMSSGIEHAKRMAAYKAVDANFPPHAKVVGIGSGSTVVYVAERIGQLKNKHDFVCISTGFQSKQLIIDNGLTLGAIEQFPKVDIAFDGADEVDTNLNLIKGGGACLFQEKLVASSADKFIVVADTRKKSPSDLGIAWRKGVPIEVVPNSYAVVTRQLKELGAKSVVLRQGGGAKAGPVVTDNNNFLIDADFGSISDPGSLHQQIKLLVGVVETGLFVDMAHTAYFGDESGEVSEQSR</sequence>
<feature type="chain" id="PRO_0000339890" description="Ribose-5-phosphate isomerase">
    <location>
        <begin position="1"/>
        <end position="247"/>
    </location>
</feature>
<reference key="1">
    <citation type="journal article" date="2009" name="Nature">
        <title>Evolution of pathogenicity and sexual reproduction in eight Candida genomes.</title>
        <authorList>
            <person name="Butler G."/>
            <person name="Rasmussen M.D."/>
            <person name="Lin M.F."/>
            <person name="Santos M.A.S."/>
            <person name="Sakthikumar S."/>
            <person name="Munro C.A."/>
            <person name="Rheinbay E."/>
            <person name="Grabherr M."/>
            <person name="Forche A."/>
            <person name="Reedy J.L."/>
            <person name="Agrafioti I."/>
            <person name="Arnaud M.B."/>
            <person name="Bates S."/>
            <person name="Brown A.J.P."/>
            <person name="Brunke S."/>
            <person name="Costanzo M.C."/>
            <person name="Fitzpatrick D.A."/>
            <person name="de Groot P.W.J."/>
            <person name="Harris D."/>
            <person name="Hoyer L.L."/>
            <person name="Hube B."/>
            <person name="Klis F.M."/>
            <person name="Kodira C."/>
            <person name="Lennard N."/>
            <person name="Logue M.E."/>
            <person name="Martin R."/>
            <person name="Neiman A.M."/>
            <person name="Nikolaou E."/>
            <person name="Quail M.A."/>
            <person name="Quinn J."/>
            <person name="Santos M.C."/>
            <person name="Schmitzberger F.F."/>
            <person name="Sherlock G."/>
            <person name="Shah P."/>
            <person name="Silverstein K.A.T."/>
            <person name="Skrzypek M.S."/>
            <person name="Soll D."/>
            <person name="Staggs R."/>
            <person name="Stansfield I."/>
            <person name="Stumpf M.P.H."/>
            <person name="Sudbery P.E."/>
            <person name="Srikantha T."/>
            <person name="Zeng Q."/>
            <person name="Berman J."/>
            <person name="Berriman M."/>
            <person name="Heitman J."/>
            <person name="Gow N.A.R."/>
            <person name="Lorenz M.C."/>
            <person name="Birren B.W."/>
            <person name="Kellis M."/>
            <person name="Cuomo C.A."/>
        </authorList>
    </citation>
    <scope>NUCLEOTIDE SEQUENCE [LARGE SCALE GENOMIC DNA]</scope>
    <source>
        <strain>ATCC 6260 / CBS 566 / DSM 6381 / JCM 1539 / NBRC 10279 / NRRL Y-324</strain>
    </source>
</reference>
<organism>
    <name type="scientific">Meyerozyma guilliermondii (strain ATCC 6260 / CBS 566 / DSM 6381 / JCM 1539 / NBRC 10279 / NRRL Y-324)</name>
    <name type="common">Yeast</name>
    <name type="synonym">Candida guilliermondii</name>
    <dbReference type="NCBI Taxonomy" id="294746"/>
    <lineage>
        <taxon>Eukaryota</taxon>
        <taxon>Fungi</taxon>
        <taxon>Dikarya</taxon>
        <taxon>Ascomycota</taxon>
        <taxon>Saccharomycotina</taxon>
        <taxon>Pichiomycetes</taxon>
        <taxon>Debaryomycetaceae</taxon>
        <taxon>Meyerozyma</taxon>
    </lineage>
</organism>
<accession>A5DFH6</accession>
<name>RPIA_PICGU</name>
<gene>
    <name type="primary">RKI1</name>
    <name type="ORF">PGUG_02027</name>
</gene>
<proteinExistence type="inferred from homology"/>
<protein>
    <recommendedName>
        <fullName>Ribose-5-phosphate isomerase</fullName>
        <ecNumber>5.3.1.6</ecNumber>
    </recommendedName>
    <alternativeName>
        <fullName>D-ribose-5-phosphate ketol-isomerase</fullName>
    </alternativeName>
    <alternativeName>
        <fullName>Phosphoriboisomerase</fullName>
    </alternativeName>
</protein>
<evidence type="ECO:0000305" key="1"/>
<comment type="catalytic activity">
    <reaction>
        <text>aldehydo-D-ribose 5-phosphate = D-ribulose 5-phosphate</text>
        <dbReference type="Rhea" id="RHEA:14657"/>
        <dbReference type="ChEBI" id="CHEBI:58121"/>
        <dbReference type="ChEBI" id="CHEBI:58273"/>
        <dbReference type="EC" id="5.3.1.6"/>
    </reaction>
</comment>
<comment type="pathway">
    <text>Carbohydrate degradation; pentose phosphate pathway; D-ribose 5-phosphate from D-ribulose 5-phosphate (non-oxidative stage): step 1/1.</text>
</comment>
<comment type="subcellular location">
    <subcellularLocation>
        <location evidence="1">Cytoplasm</location>
    </subcellularLocation>
</comment>
<comment type="similarity">
    <text evidence="1">Belongs to the ribose 5-phosphate isomerase family.</text>
</comment>
<keyword id="KW-0963">Cytoplasm</keyword>
<keyword id="KW-0413">Isomerase</keyword>
<keyword id="KW-1185">Reference proteome</keyword>
<dbReference type="EC" id="5.3.1.6"/>
<dbReference type="EMBL" id="CH408156">
    <property type="protein sequence ID" value="EDK37929.2"/>
    <property type="molecule type" value="Genomic_DNA"/>
</dbReference>
<dbReference type="RefSeq" id="XP_001486356.1">
    <property type="nucleotide sequence ID" value="XM_001486306.1"/>
</dbReference>
<dbReference type="SMR" id="A5DFH6"/>
<dbReference type="FunCoup" id="A5DFH6">
    <property type="interactions" value="899"/>
</dbReference>
<dbReference type="STRING" id="294746.A5DFH6"/>
<dbReference type="GeneID" id="5127693"/>
<dbReference type="KEGG" id="pgu:PGUG_02027"/>
<dbReference type="eggNOG" id="KOG3075">
    <property type="taxonomic scope" value="Eukaryota"/>
</dbReference>
<dbReference type="HOGENOM" id="CLU_056590_0_0_1"/>
<dbReference type="InParanoid" id="A5DFH6"/>
<dbReference type="OMA" id="ACHVQEK"/>
<dbReference type="OrthoDB" id="1555531at2759"/>
<dbReference type="UniPathway" id="UPA00115">
    <property type="reaction ID" value="UER00412"/>
</dbReference>
<dbReference type="Proteomes" id="UP000001997">
    <property type="component" value="Unassembled WGS sequence"/>
</dbReference>
<dbReference type="GO" id="GO:0005737">
    <property type="term" value="C:cytoplasm"/>
    <property type="evidence" value="ECO:0007669"/>
    <property type="project" value="UniProtKB-SubCell"/>
</dbReference>
<dbReference type="GO" id="GO:0004751">
    <property type="term" value="F:ribose-5-phosphate isomerase activity"/>
    <property type="evidence" value="ECO:0007669"/>
    <property type="project" value="UniProtKB-EC"/>
</dbReference>
<dbReference type="GO" id="GO:0006014">
    <property type="term" value="P:D-ribose metabolic process"/>
    <property type="evidence" value="ECO:0007669"/>
    <property type="project" value="TreeGrafter"/>
</dbReference>
<dbReference type="GO" id="GO:0009052">
    <property type="term" value="P:pentose-phosphate shunt, non-oxidative branch"/>
    <property type="evidence" value="ECO:0007669"/>
    <property type="project" value="InterPro"/>
</dbReference>
<dbReference type="GO" id="GO:0008615">
    <property type="term" value="P:pyridoxine biosynthetic process"/>
    <property type="evidence" value="ECO:0007669"/>
    <property type="project" value="EnsemblFungi"/>
</dbReference>
<dbReference type="CDD" id="cd01398">
    <property type="entry name" value="RPI_A"/>
    <property type="match status" value="1"/>
</dbReference>
<dbReference type="FunFam" id="3.40.50.1360:FF:000014">
    <property type="entry name" value="Ribose 5-phosphate isomerase"/>
    <property type="match status" value="1"/>
</dbReference>
<dbReference type="FunFam" id="3.30.70.260:FF:000053">
    <property type="entry name" value="Ribose-5-phosphate isomerase, putative"/>
    <property type="match status" value="1"/>
</dbReference>
<dbReference type="Gene3D" id="3.30.70.260">
    <property type="match status" value="1"/>
</dbReference>
<dbReference type="Gene3D" id="3.40.50.1360">
    <property type="match status" value="1"/>
</dbReference>
<dbReference type="InterPro" id="IPR037171">
    <property type="entry name" value="NagB/RpiA_transferase-like"/>
</dbReference>
<dbReference type="InterPro" id="IPR004788">
    <property type="entry name" value="Ribose5P_isomerase_type_A"/>
</dbReference>
<dbReference type="NCBIfam" id="NF001924">
    <property type="entry name" value="PRK00702.1"/>
    <property type="match status" value="1"/>
</dbReference>
<dbReference type="NCBIfam" id="TIGR00021">
    <property type="entry name" value="rpiA"/>
    <property type="match status" value="1"/>
</dbReference>
<dbReference type="PANTHER" id="PTHR11934">
    <property type="entry name" value="RIBOSE-5-PHOSPHATE ISOMERASE"/>
    <property type="match status" value="1"/>
</dbReference>
<dbReference type="PANTHER" id="PTHR11934:SF0">
    <property type="entry name" value="RIBOSE-5-PHOSPHATE ISOMERASE"/>
    <property type="match status" value="1"/>
</dbReference>
<dbReference type="Pfam" id="PF06026">
    <property type="entry name" value="Rib_5-P_isom_A"/>
    <property type="match status" value="1"/>
</dbReference>
<dbReference type="SUPFAM" id="SSF75445">
    <property type="entry name" value="D-ribose-5-phosphate isomerase (RpiA), lid domain"/>
    <property type="match status" value="1"/>
</dbReference>
<dbReference type="SUPFAM" id="SSF100950">
    <property type="entry name" value="NagB/RpiA/CoA transferase-like"/>
    <property type="match status" value="1"/>
</dbReference>